<keyword id="KW-0028">Amino-acid biosynthesis</keyword>
<keyword id="KW-0057">Aromatic amino acid biosynthesis</keyword>
<keyword id="KW-0210">Decarboxylase</keyword>
<keyword id="KW-0456">Lyase</keyword>
<keyword id="KW-0822">Tryptophan biosynthesis</keyword>
<proteinExistence type="inferred from homology"/>
<evidence type="ECO:0000255" key="1">
    <source>
        <dbReference type="HAMAP-Rule" id="MF_00134"/>
    </source>
</evidence>
<accession>A6QGS2</accession>
<dbReference type="EC" id="4.1.1.48" evidence="1"/>
<dbReference type="EMBL" id="AP009351">
    <property type="protein sequence ID" value="BAF67554.1"/>
    <property type="molecule type" value="Genomic_DNA"/>
</dbReference>
<dbReference type="RefSeq" id="WP_000154118.1">
    <property type="nucleotide sequence ID" value="NZ_JBBIAE010000001.1"/>
</dbReference>
<dbReference type="SMR" id="A6QGS2"/>
<dbReference type="KEGG" id="sae:NWMN_1282"/>
<dbReference type="HOGENOM" id="CLU_034247_2_1_9"/>
<dbReference type="UniPathway" id="UPA00035">
    <property type="reaction ID" value="UER00043"/>
</dbReference>
<dbReference type="Proteomes" id="UP000006386">
    <property type="component" value="Chromosome"/>
</dbReference>
<dbReference type="GO" id="GO:0004425">
    <property type="term" value="F:indole-3-glycerol-phosphate synthase activity"/>
    <property type="evidence" value="ECO:0007669"/>
    <property type="project" value="UniProtKB-UniRule"/>
</dbReference>
<dbReference type="GO" id="GO:0004640">
    <property type="term" value="F:phosphoribosylanthranilate isomerase activity"/>
    <property type="evidence" value="ECO:0007669"/>
    <property type="project" value="TreeGrafter"/>
</dbReference>
<dbReference type="GO" id="GO:0000162">
    <property type="term" value="P:L-tryptophan biosynthetic process"/>
    <property type="evidence" value="ECO:0007669"/>
    <property type="project" value="UniProtKB-UniRule"/>
</dbReference>
<dbReference type="CDD" id="cd00331">
    <property type="entry name" value="IGPS"/>
    <property type="match status" value="1"/>
</dbReference>
<dbReference type="FunFam" id="3.20.20.70:FF:000212">
    <property type="entry name" value="Indole-3-glycerol phosphate synthase"/>
    <property type="match status" value="1"/>
</dbReference>
<dbReference type="Gene3D" id="3.20.20.70">
    <property type="entry name" value="Aldolase class I"/>
    <property type="match status" value="1"/>
</dbReference>
<dbReference type="HAMAP" id="MF_00134_B">
    <property type="entry name" value="IGPS_B"/>
    <property type="match status" value="1"/>
</dbReference>
<dbReference type="InterPro" id="IPR013785">
    <property type="entry name" value="Aldolase_TIM"/>
</dbReference>
<dbReference type="InterPro" id="IPR045186">
    <property type="entry name" value="Indole-3-glycerol_P_synth"/>
</dbReference>
<dbReference type="InterPro" id="IPR013798">
    <property type="entry name" value="Indole-3-glycerol_P_synth_dom"/>
</dbReference>
<dbReference type="InterPro" id="IPR001468">
    <property type="entry name" value="Indole-3-GlycerolPSynthase_CS"/>
</dbReference>
<dbReference type="InterPro" id="IPR011060">
    <property type="entry name" value="RibuloseP-bd_barrel"/>
</dbReference>
<dbReference type="NCBIfam" id="NF001371">
    <property type="entry name" value="PRK00278.1-3"/>
    <property type="match status" value="1"/>
</dbReference>
<dbReference type="PANTHER" id="PTHR22854:SF2">
    <property type="entry name" value="INDOLE-3-GLYCEROL-PHOSPHATE SYNTHASE"/>
    <property type="match status" value="1"/>
</dbReference>
<dbReference type="PANTHER" id="PTHR22854">
    <property type="entry name" value="TRYPTOPHAN BIOSYNTHESIS PROTEIN"/>
    <property type="match status" value="1"/>
</dbReference>
<dbReference type="Pfam" id="PF00218">
    <property type="entry name" value="IGPS"/>
    <property type="match status" value="1"/>
</dbReference>
<dbReference type="SUPFAM" id="SSF51366">
    <property type="entry name" value="Ribulose-phoshate binding barrel"/>
    <property type="match status" value="1"/>
</dbReference>
<dbReference type="PROSITE" id="PS00614">
    <property type="entry name" value="IGPS"/>
    <property type="match status" value="1"/>
</dbReference>
<sequence>MTILSEIVKYKQSLLQNGYYQDKLNTLKSVKIQNKKSFINAIEKEPKLAIIAEIKSKSPTVNDLPERDLSQQISDYDQYGANAVSILTDEKYFSGSFERLQALTTKTTLPVLCKDFIIDPLQIDVAKQAGASMILLIVNILSDKQLKDLYNYAISQNLEVLVEVHDRHELERAYKVNAKLIGVNNRDLKRFVTNVEHTNTILENKKTNHYYISESGIHDASDVRKILHSGIDGLLIGEALMRCDNLSEFLPQLKMQKVKS</sequence>
<reference key="1">
    <citation type="journal article" date="2008" name="J. Bacteriol.">
        <title>Genome sequence of Staphylococcus aureus strain Newman and comparative analysis of staphylococcal genomes: polymorphism and evolution of two major pathogenicity islands.</title>
        <authorList>
            <person name="Baba T."/>
            <person name="Bae T."/>
            <person name="Schneewind O."/>
            <person name="Takeuchi F."/>
            <person name="Hiramatsu K."/>
        </authorList>
    </citation>
    <scope>NUCLEOTIDE SEQUENCE [LARGE SCALE GENOMIC DNA]</scope>
    <source>
        <strain>Newman</strain>
    </source>
</reference>
<organism>
    <name type="scientific">Staphylococcus aureus (strain Newman)</name>
    <dbReference type="NCBI Taxonomy" id="426430"/>
    <lineage>
        <taxon>Bacteria</taxon>
        <taxon>Bacillati</taxon>
        <taxon>Bacillota</taxon>
        <taxon>Bacilli</taxon>
        <taxon>Bacillales</taxon>
        <taxon>Staphylococcaceae</taxon>
        <taxon>Staphylococcus</taxon>
    </lineage>
</organism>
<protein>
    <recommendedName>
        <fullName evidence="1">Indole-3-glycerol phosphate synthase</fullName>
        <shortName evidence="1">IGPS</shortName>
        <ecNumber evidence="1">4.1.1.48</ecNumber>
    </recommendedName>
</protein>
<comment type="catalytic activity">
    <reaction evidence="1">
        <text>1-(2-carboxyphenylamino)-1-deoxy-D-ribulose 5-phosphate + H(+) = (1S,2R)-1-C-(indol-3-yl)glycerol 3-phosphate + CO2 + H2O</text>
        <dbReference type="Rhea" id="RHEA:23476"/>
        <dbReference type="ChEBI" id="CHEBI:15377"/>
        <dbReference type="ChEBI" id="CHEBI:15378"/>
        <dbReference type="ChEBI" id="CHEBI:16526"/>
        <dbReference type="ChEBI" id="CHEBI:58613"/>
        <dbReference type="ChEBI" id="CHEBI:58866"/>
        <dbReference type="EC" id="4.1.1.48"/>
    </reaction>
</comment>
<comment type="pathway">
    <text evidence="1">Amino-acid biosynthesis; L-tryptophan biosynthesis; L-tryptophan from chorismate: step 4/5.</text>
</comment>
<comment type="similarity">
    <text evidence="1">Belongs to the TrpC family.</text>
</comment>
<feature type="chain" id="PRO_1000095892" description="Indole-3-glycerol phosphate synthase">
    <location>
        <begin position="1"/>
        <end position="260"/>
    </location>
</feature>
<name>TRPC_STAAE</name>
<gene>
    <name evidence="1" type="primary">trpC</name>
    <name type="ordered locus">NWMN_1282</name>
</gene>